<proteinExistence type="inferred from homology"/>
<organism>
    <name type="scientific">Micrococcus luteus (strain ATCC 4698 / DSM 20030 / JCM 1464 / CCM 169 / CCUG 5858 / IAM 1056 / NBRC 3333 / NCIMB 9278 / NCTC 2665 / VKM Ac-2230)</name>
    <name type="common">Micrococcus lysodeikticus</name>
    <dbReference type="NCBI Taxonomy" id="465515"/>
    <lineage>
        <taxon>Bacteria</taxon>
        <taxon>Bacillati</taxon>
        <taxon>Actinomycetota</taxon>
        <taxon>Actinomycetes</taxon>
        <taxon>Micrococcales</taxon>
        <taxon>Micrococcaceae</taxon>
        <taxon>Micrococcus</taxon>
    </lineage>
</organism>
<comment type="function">
    <text evidence="1">Produces ATP from ADP in the presence of a proton gradient across the membrane. The gamma chain is believed to be important in regulating ATPase activity and the flow of protons through the CF(0) complex.</text>
</comment>
<comment type="subunit">
    <text evidence="1">F-type ATPases have 2 components, CF(1) - the catalytic core - and CF(0) - the membrane proton channel. CF(1) has five subunits: alpha(3), beta(3), gamma(1), delta(1), epsilon(1). CF(0) has three main subunits: a, b and c.</text>
</comment>
<comment type="subcellular location">
    <subcellularLocation>
        <location evidence="1">Cell membrane</location>
        <topology evidence="1">Peripheral membrane protein</topology>
    </subcellularLocation>
</comment>
<comment type="similarity">
    <text evidence="1">Belongs to the ATPase gamma chain family.</text>
</comment>
<accession>C5CA77</accession>
<protein>
    <recommendedName>
        <fullName evidence="1">ATP synthase gamma chain</fullName>
    </recommendedName>
    <alternativeName>
        <fullName evidence="1">ATP synthase F1 sector gamma subunit</fullName>
    </alternativeName>
    <alternativeName>
        <fullName evidence="1">F-ATPase gamma subunit</fullName>
    </alternativeName>
</protein>
<reference key="1">
    <citation type="journal article" date="2010" name="J. Bacteriol.">
        <title>Genome sequence of the Fleming strain of Micrococcus luteus, a simple free-living actinobacterium.</title>
        <authorList>
            <person name="Young M."/>
            <person name="Artsatbanov V."/>
            <person name="Beller H.R."/>
            <person name="Chandra G."/>
            <person name="Chater K.F."/>
            <person name="Dover L.G."/>
            <person name="Goh E.B."/>
            <person name="Kahan T."/>
            <person name="Kaprelyants A.S."/>
            <person name="Kyrpides N."/>
            <person name="Lapidus A."/>
            <person name="Lowry S.R."/>
            <person name="Lykidis A."/>
            <person name="Mahillon J."/>
            <person name="Markowitz V."/>
            <person name="Mavromatis K."/>
            <person name="Mukamolova G.V."/>
            <person name="Oren A."/>
            <person name="Rokem J.S."/>
            <person name="Smith M.C."/>
            <person name="Young D.I."/>
            <person name="Greenblatt C.L."/>
        </authorList>
    </citation>
    <scope>NUCLEOTIDE SEQUENCE [LARGE SCALE GENOMIC DNA]</scope>
    <source>
        <strain>ATCC 4698 / DSM 20030 / JCM 1464 / CCM 169 / CCUG 5858 / IAM 1056 / NBRC 3333 / NCIMB 9278 / NCTC 2665 / VKM Ac-2230</strain>
    </source>
</reference>
<name>ATPG_MICLC</name>
<gene>
    <name evidence="1" type="primary">atpG</name>
    <name type="ordered locus">Mlut_08170</name>
</gene>
<dbReference type="EMBL" id="CP001628">
    <property type="protein sequence ID" value="ACS30346.1"/>
    <property type="molecule type" value="Genomic_DNA"/>
</dbReference>
<dbReference type="RefSeq" id="WP_010079016.1">
    <property type="nucleotide sequence ID" value="NC_012803.1"/>
</dbReference>
<dbReference type="SMR" id="C5CA77"/>
<dbReference type="STRING" id="465515.Mlut_08170"/>
<dbReference type="EnsemblBacteria" id="ACS30346">
    <property type="protein sequence ID" value="ACS30346"/>
    <property type="gene ID" value="Mlut_08170"/>
</dbReference>
<dbReference type="GeneID" id="93344979"/>
<dbReference type="KEGG" id="mlu:Mlut_08170"/>
<dbReference type="PATRIC" id="fig|465515.4.peg.780"/>
<dbReference type="eggNOG" id="COG0224">
    <property type="taxonomic scope" value="Bacteria"/>
</dbReference>
<dbReference type="HOGENOM" id="CLU_050669_0_0_11"/>
<dbReference type="Proteomes" id="UP000000738">
    <property type="component" value="Chromosome"/>
</dbReference>
<dbReference type="GO" id="GO:0005886">
    <property type="term" value="C:plasma membrane"/>
    <property type="evidence" value="ECO:0007669"/>
    <property type="project" value="UniProtKB-SubCell"/>
</dbReference>
<dbReference type="GO" id="GO:0045259">
    <property type="term" value="C:proton-transporting ATP synthase complex"/>
    <property type="evidence" value="ECO:0007669"/>
    <property type="project" value="UniProtKB-KW"/>
</dbReference>
<dbReference type="GO" id="GO:0005524">
    <property type="term" value="F:ATP binding"/>
    <property type="evidence" value="ECO:0007669"/>
    <property type="project" value="UniProtKB-UniRule"/>
</dbReference>
<dbReference type="GO" id="GO:0046933">
    <property type="term" value="F:proton-transporting ATP synthase activity, rotational mechanism"/>
    <property type="evidence" value="ECO:0007669"/>
    <property type="project" value="UniProtKB-UniRule"/>
</dbReference>
<dbReference type="GO" id="GO:0042777">
    <property type="term" value="P:proton motive force-driven plasma membrane ATP synthesis"/>
    <property type="evidence" value="ECO:0007669"/>
    <property type="project" value="UniProtKB-UniRule"/>
</dbReference>
<dbReference type="CDD" id="cd12151">
    <property type="entry name" value="F1-ATPase_gamma"/>
    <property type="match status" value="1"/>
</dbReference>
<dbReference type="Gene3D" id="3.40.1380.10">
    <property type="match status" value="1"/>
</dbReference>
<dbReference type="Gene3D" id="1.10.287.80">
    <property type="entry name" value="ATP synthase, gamma subunit, helix hairpin domain"/>
    <property type="match status" value="1"/>
</dbReference>
<dbReference type="HAMAP" id="MF_00815">
    <property type="entry name" value="ATP_synth_gamma_bact"/>
    <property type="match status" value="1"/>
</dbReference>
<dbReference type="InterPro" id="IPR035968">
    <property type="entry name" value="ATP_synth_F1_ATPase_gsu"/>
</dbReference>
<dbReference type="InterPro" id="IPR000131">
    <property type="entry name" value="ATP_synth_F1_gsu"/>
</dbReference>
<dbReference type="InterPro" id="IPR023632">
    <property type="entry name" value="ATP_synth_F1_gsu_CS"/>
</dbReference>
<dbReference type="NCBIfam" id="TIGR01146">
    <property type="entry name" value="ATPsyn_F1gamma"/>
    <property type="match status" value="1"/>
</dbReference>
<dbReference type="NCBIfam" id="NF004145">
    <property type="entry name" value="PRK05621.1-2"/>
    <property type="match status" value="1"/>
</dbReference>
<dbReference type="PANTHER" id="PTHR11693">
    <property type="entry name" value="ATP SYNTHASE GAMMA CHAIN"/>
    <property type="match status" value="1"/>
</dbReference>
<dbReference type="PANTHER" id="PTHR11693:SF22">
    <property type="entry name" value="ATP SYNTHASE SUBUNIT GAMMA, MITOCHONDRIAL"/>
    <property type="match status" value="1"/>
</dbReference>
<dbReference type="Pfam" id="PF00231">
    <property type="entry name" value="ATP-synt"/>
    <property type="match status" value="1"/>
</dbReference>
<dbReference type="PRINTS" id="PR00126">
    <property type="entry name" value="ATPASEGAMMA"/>
</dbReference>
<dbReference type="SUPFAM" id="SSF52943">
    <property type="entry name" value="ATP synthase (F1-ATPase), gamma subunit"/>
    <property type="match status" value="1"/>
</dbReference>
<dbReference type="PROSITE" id="PS00153">
    <property type="entry name" value="ATPASE_GAMMA"/>
    <property type="match status" value="1"/>
</dbReference>
<evidence type="ECO:0000255" key="1">
    <source>
        <dbReference type="HAMAP-Rule" id="MF_00815"/>
    </source>
</evidence>
<sequence>MGAQIRVYRQKIASTSSMRKIFKAMELIATSRITKARERVSASLPYANAITRAVSAVSSQHDIDHVLTTEPENPTRAAVLIMSSDRGLAGAYSANVLRKAEQLLTRLGEEGKDVDVYVVGRKAQTYFDFRGRGYKKLWTGQTDAPVAERAAEIGEVLVDAFLTDTADGGVDEIHVVFTEFVSLVKQNPHVVRLLPLEVVEEEAATAEDVLPLYEYEPDAEEVLDALLPKYIESRIFNAMLQSAASELANRQRAMKSAGDNATSLIKDYTLLMNNARQAEITQELTELIAGADALNNS</sequence>
<feature type="chain" id="PRO_1000213041" description="ATP synthase gamma chain">
    <location>
        <begin position="1"/>
        <end position="297"/>
    </location>
</feature>
<keyword id="KW-0066">ATP synthesis</keyword>
<keyword id="KW-1003">Cell membrane</keyword>
<keyword id="KW-0139">CF(1)</keyword>
<keyword id="KW-0375">Hydrogen ion transport</keyword>
<keyword id="KW-0406">Ion transport</keyword>
<keyword id="KW-0472">Membrane</keyword>
<keyword id="KW-1185">Reference proteome</keyword>
<keyword id="KW-0813">Transport</keyword>